<protein>
    <recommendedName>
        <fullName>Phosphoglucosamine mutase</fullName>
        <ecNumber>5.4.2.10</ecNumber>
    </recommendedName>
</protein>
<dbReference type="EC" id="5.4.2.10"/>
<dbReference type="EMBL" id="BX950229">
    <property type="protein sequence ID" value="CAF30633.1"/>
    <property type="molecule type" value="Genomic_DNA"/>
</dbReference>
<dbReference type="RefSeq" id="WP_011171021.1">
    <property type="nucleotide sequence ID" value="NC_005791.1"/>
</dbReference>
<dbReference type="SMR" id="Q6LYB4"/>
<dbReference type="STRING" id="267377.MMP1077"/>
<dbReference type="EnsemblBacteria" id="CAF30633">
    <property type="protein sequence ID" value="CAF30633"/>
    <property type="gene ID" value="MMP1077"/>
</dbReference>
<dbReference type="GeneID" id="2762645"/>
<dbReference type="KEGG" id="mmp:MMP1077"/>
<dbReference type="PATRIC" id="fig|267377.15.peg.1110"/>
<dbReference type="eggNOG" id="arCOG00767">
    <property type="taxonomic scope" value="Archaea"/>
</dbReference>
<dbReference type="HOGENOM" id="CLU_016950_7_1_2"/>
<dbReference type="OrthoDB" id="10363at2157"/>
<dbReference type="BRENDA" id="5.4.2.10">
    <property type="organism ID" value="3262"/>
</dbReference>
<dbReference type="Proteomes" id="UP000000590">
    <property type="component" value="Chromosome"/>
</dbReference>
<dbReference type="GO" id="GO:0000287">
    <property type="term" value="F:magnesium ion binding"/>
    <property type="evidence" value="ECO:0007669"/>
    <property type="project" value="UniProtKB-UniRule"/>
</dbReference>
<dbReference type="GO" id="GO:0008966">
    <property type="term" value="F:phosphoglucosamine mutase activity"/>
    <property type="evidence" value="ECO:0000314"/>
    <property type="project" value="CACAO"/>
</dbReference>
<dbReference type="GO" id="GO:0005975">
    <property type="term" value="P:carbohydrate metabolic process"/>
    <property type="evidence" value="ECO:0007669"/>
    <property type="project" value="InterPro"/>
</dbReference>
<dbReference type="CDD" id="cd03087">
    <property type="entry name" value="PGM_like1"/>
    <property type="match status" value="1"/>
</dbReference>
<dbReference type="FunFam" id="3.40.120.10:FF:000001">
    <property type="entry name" value="Phosphoglucosamine mutase"/>
    <property type="match status" value="1"/>
</dbReference>
<dbReference type="FunFam" id="3.40.120.10:FF:000002">
    <property type="entry name" value="Phosphoglucosamine mutase"/>
    <property type="match status" value="1"/>
</dbReference>
<dbReference type="FunFam" id="3.30.310.50:FF:000009">
    <property type="entry name" value="Probable phosphoglucosamine mutase"/>
    <property type="match status" value="1"/>
</dbReference>
<dbReference type="Gene3D" id="3.40.120.10">
    <property type="entry name" value="Alpha-D-Glucose-1,6-Bisphosphate, subunit A, domain 3"/>
    <property type="match status" value="3"/>
</dbReference>
<dbReference type="Gene3D" id="3.30.310.50">
    <property type="entry name" value="Alpha-D-phosphohexomutase, C-terminal domain"/>
    <property type="match status" value="1"/>
</dbReference>
<dbReference type="HAMAP" id="MF_01554_A">
    <property type="entry name" value="GlmM_A"/>
    <property type="match status" value="1"/>
</dbReference>
<dbReference type="InterPro" id="IPR005844">
    <property type="entry name" value="A-D-PHexomutase_a/b/a-I"/>
</dbReference>
<dbReference type="InterPro" id="IPR016055">
    <property type="entry name" value="A-D-PHexomutase_a/b/a-I/II/III"/>
</dbReference>
<dbReference type="InterPro" id="IPR005845">
    <property type="entry name" value="A-D-PHexomutase_a/b/a-II"/>
</dbReference>
<dbReference type="InterPro" id="IPR005846">
    <property type="entry name" value="A-D-PHexomutase_a/b/a-III"/>
</dbReference>
<dbReference type="InterPro" id="IPR005843">
    <property type="entry name" value="A-D-PHexomutase_C"/>
</dbReference>
<dbReference type="InterPro" id="IPR036900">
    <property type="entry name" value="A-D-PHexomutase_C_sf"/>
</dbReference>
<dbReference type="InterPro" id="IPR016066">
    <property type="entry name" value="A-D-PHexomutase_CS"/>
</dbReference>
<dbReference type="InterPro" id="IPR005841">
    <property type="entry name" value="Alpha-D-phosphohexomutase_SF"/>
</dbReference>
<dbReference type="InterPro" id="IPR023666">
    <property type="entry name" value="GlmM_arc"/>
</dbReference>
<dbReference type="InterPro" id="IPR024086">
    <property type="entry name" value="GlmM_arc-type"/>
</dbReference>
<dbReference type="NCBIfam" id="TIGR03990">
    <property type="entry name" value="Arch_GlmM"/>
    <property type="match status" value="1"/>
</dbReference>
<dbReference type="PANTHER" id="PTHR43771">
    <property type="entry name" value="PHOSPHOMANNOMUTASE"/>
    <property type="match status" value="1"/>
</dbReference>
<dbReference type="PANTHER" id="PTHR43771:SF1">
    <property type="entry name" value="PHOSPHOMANNOMUTASE"/>
    <property type="match status" value="1"/>
</dbReference>
<dbReference type="Pfam" id="PF02878">
    <property type="entry name" value="PGM_PMM_I"/>
    <property type="match status" value="1"/>
</dbReference>
<dbReference type="Pfam" id="PF02879">
    <property type="entry name" value="PGM_PMM_II"/>
    <property type="match status" value="1"/>
</dbReference>
<dbReference type="Pfam" id="PF02880">
    <property type="entry name" value="PGM_PMM_III"/>
    <property type="match status" value="1"/>
</dbReference>
<dbReference type="Pfam" id="PF00408">
    <property type="entry name" value="PGM_PMM_IV"/>
    <property type="match status" value="1"/>
</dbReference>
<dbReference type="PRINTS" id="PR00509">
    <property type="entry name" value="PGMPMM"/>
</dbReference>
<dbReference type="SUPFAM" id="SSF55957">
    <property type="entry name" value="Phosphoglucomutase, C-terminal domain"/>
    <property type="match status" value="1"/>
</dbReference>
<dbReference type="SUPFAM" id="SSF53738">
    <property type="entry name" value="Phosphoglucomutase, first 3 domains"/>
    <property type="match status" value="3"/>
</dbReference>
<dbReference type="PROSITE" id="PS00710">
    <property type="entry name" value="PGM_PMM"/>
    <property type="match status" value="1"/>
</dbReference>
<accession>Q6LYB4</accession>
<proteinExistence type="evidence at protein level"/>
<keyword id="KW-0413">Isomerase</keyword>
<keyword id="KW-0460">Magnesium</keyword>
<keyword id="KW-0479">Metal-binding</keyword>
<keyword id="KW-0597">Phosphoprotein</keyword>
<keyword id="KW-1185">Reference proteome</keyword>
<name>GLMM_METMP</name>
<evidence type="ECO:0000250" key="1"/>
<evidence type="ECO:0000269" key="2">
    <source>
    </source>
</evidence>
<evidence type="ECO:0000305" key="3"/>
<organism>
    <name type="scientific">Methanococcus maripaludis (strain DSM 14266 / JCM 13030 / NBRC 101832 / S2 / LL)</name>
    <dbReference type="NCBI Taxonomy" id="267377"/>
    <lineage>
        <taxon>Archaea</taxon>
        <taxon>Methanobacteriati</taxon>
        <taxon>Methanobacteriota</taxon>
        <taxon>Methanomada group</taxon>
        <taxon>Methanococci</taxon>
        <taxon>Methanococcales</taxon>
        <taxon>Methanococcaceae</taxon>
        <taxon>Methanococcus</taxon>
    </lineage>
</organism>
<comment type="function">
    <text evidence="2">Catalyzes the conversion of glucosamine-6-phosphate to glucosamine-1-phosphate. Also catalyzes the isomerization of glucose-1-phosphate to glucose-6-phosphate, but at a 5-fold lower rate.</text>
</comment>
<comment type="catalytic activity">
    <reaction evidence="2">
        <text>alpha-D-glucosamine 1-phosphate = D-glucosamine 6-phosphate</text>
        <dbReference type="Rhea" id="RHEA:23424"/>
        <dbReference type="ChEBI" id="CHEBI:58516"/>
        <dbReference type="ChEBI" id="CHEBI:58725"/>
        <dbReference type="EC" id="5.4.2.10"/>
    </reaction>
</comment>
<comment type="cofactor">
    <cofactor evidence="2">
        <name>Mg(2+)</name>
        <dbReference type="ChEBI" id="CHEBI:18420"/>
    </cofactor>
    <text evidence="2">Binds 1 Mg(2+) ion per subunit.</text>
</comment>
<comment type="subunit">
    <text evidence="2">Monomer. Also forms large aggregates.</text>
</comment>
<comment type="PTM">
    <text>Activated by phosphorylation. Glucose-1,6-bisphosphate or fructose-1,6-bisphosphate can activate the enzyme in vitro. However, since glucose-1,6-bisphosphate is not believed to form in methanogens, the physiologically relevant activator might be a serine kinase protein.</text>
</comment>
<comment type="similarity">
    <text evidence="3">Belongs to the phosphohexose mutase family.</text>
</comment>
<gene>
    <name type="primary">glmM</name>
    <name type="ordered locus">MMP1077</name>
</gene>
<sequence length="447" mass="49384">MKLFGTSGIRMKNLDPLIAYKVGFAISKNFKKAVIGRDTRTTGNLIESAITAGLLNGGCDVTTIGMVPTPVLGYSAKDYDLGIMITASHNPPEYNGIKLFNKNGTAFDPKQEKELENIINNDDFNECTWDNIGCVVEDKTAVKKYFEYILQNLNLNTNFNVVVDCANAAGCVVSPNIFTEAGCKVISVNSHCDGRFVGRMPEPNETNLKETVDIIKGLNSNGRNYVGIAHDGDADRMIAIDELGRVTDFDKLLAAFCKYLVQKTGADKIVTTVDASMAIEEYLNEFGAKVIRTKIGDVAVAEELEKTGAIFGGEPSGTWIHRDIHLTPDGILSGLRVLEMMEFYGKKLHEIIDEVPSYCNMREKISCPDNLKQNVMDYVSKEGEKIFEKKPETLDGVRFSFENGWILIRPSGTESYVRVRVEAKEKDFAEKLMKTGISMVKTGISGK</sequence>
<reference key="1">
    <citation type="journal article" date="2004" name="J. Bacteriol.">
        <title>Complete genome sequence of the genetically tractable hydrogenotrophic methanogen Methanococcus maripaludis.</title>
        <authorList>
            <person name="Hendrickson E.L."/>
            <person name="Kaul R."/>
            <person name="Zhou Y."/>
            <person name="Bovee D."/>
            <person name="Chapman P."/>
            <person name="Chung J."/>
            <person name="Conway de Macario E."/>
            <person name="Dodsworth J.A."/>
            <person name="Gillett W."/>
            <person name="Graham D.E."/>
            <person name="Hackett M."/>
            <person name="Haydock A.K."/>
            <person name="Kang A."/>
            <person name="Land M.L."/>
            <person name="Levy R."/>
            <person name="Lie T.J."/>
            <person name="Major T.A."/>
            <person name="Moore B.C."/>
            <person name="Porat I."/>
            <person name="Palmeiri A."/>
            <person name="Rouse G."/>
            <person name="Saenphimmachak C."/>
            <person name="Soell D."/>
            <person name="Van Dien S."/>
            <person name="Wang T."/>
            <person name="Whitman W.B."/>
            <person name="Xia Q."/>
            <person name="Zhang Y."/>
            <person name="Larimer F.W."/>
            <person name="Olson M.V."/>
            <person name="Leigh J.A."/>
        </authorList>
    </citation>
    <scope>NUCLEOTIDE SEQUENCE [LARGE SCALE GENOMIC DNA]</scope>
    <source>
        <strain>DSM 14266 / JCM 13030 / NBRC 101832 / S2 / LL</strain>
    </source>
</reference>
<reference key="2">
    <citation type="journal article" date="2008" name="J. Bacteriol.">
        <title>Acetamido sugar biosynthesis in the Euryarchaea.</title>
        <authorList>
            <person name="Namboori S.C."/>
            <person name="Graham D.E."/>
        </authorList>
    </citation>
    <scope>FUNCTION</scope>
    <scope>CATALYTIC ACTIVITY</scope>
    <scope>COFACTOR</scope>
    <scope>PTM</scope>
    <scope>PH DEPENDENCE</scope>
    <scope>SUBUNIT</scope>
    <source>
        <strain>900</strain>
    </source>
</reference>
<feature type="chain" id="PRO_0000337813" description="Phosphoglucosamine mutase">
    <location>
        <begin position="1"/>
        <end position="447"/>
    </location>
</feature>
<feature type="active site" description="Phosphoserine intermediate" evidence="1">
    <location>
        <position position="88"/>
    </location>
</feature>
<feature type="binding site" description="via phosphate group" evidence="1">
    <location>
        <position position="88"/>
    </location>
    <ligand>
        <name>Mg(2+)</name>
        <dbReference type="ChEBI" id="CHEBI:18420"/>
    </ligand>
</feature>
<feature type="binding site" evidence="1">
    <location>
        <position position="231"/>
    </location>
    <ligand>
        <name>Mg(2+)</name>
        <dbReference type="ChEBI" id="CHEBI:18420"/>
    </ligand>
</feature>
<feature type="binding site" evidence="1">
    <location>
        <position position="233"/>
    </location>
    <ligand>
        <name>Mg(2+)</name>
        <dbReference type="ChEBI" id="CHEBI:18420"/>
    </ligand>
</feature>
<feature type="binding site" evidence="1">
    <location>
        <position position="235"/>
    </location>
    <ligand>
        <name>Mg(2+)</name>
        <dbReference type="ChEBI" id="CHEBI:18420"/>
    </ligand>
</feature>
<feature type="modified residue" description="Phosphoserine" evidence="1">
    <location>
        <position position="88"/>
    </location>
</feature>